<protein>
    <recommendedName>
        <fullName>NADH-ubiquinone oxidoreductase chain 3</fullName>
        <ecNumber>7.1.1.2</ecNumber>
    </recommendedName>
    <alternativeName>
        <fullName>NADH dehydrogenase subunit 3</fullName>
    </alternativeName>
</protein>
<keyword id="KW-0249">Electron transport</keyword>
<keyword id="KW-0472">Membrane</keyword>
<keyword id="KW-0496">Mitochondrion</keyword>
<keyword id="KW-0520">NAD</keyword>
<keyword id="KW-0679">Respiratory chain</keyword>
<keyword id="KW-1278">Translocase</keyword>
<keyword id="KW-0812">Transmembrane</keyword>
<keyword id="KW-1133">Transmembrane helix</keyword>
<keyword id="KW-0813">Transport</keyword>
<keyword id="KW-0830">Ubiquinone</keyword>
<name>NU3M_ACACA</name>
<proteinExistence type="inferred from homology"/>
<geneLocation type="mitochondrion"/>
<feature type="chain" id="PRO_0000117699" description="NADH-ubiquinone oxidoreductase chain 3">
    <location>
        <begin position="1"/>
        <end position="118"/>
    </location>
</feature>
<feature type="transmembrane region" description="Helical" evidence="2">
    <location>
        <begin position="5"/>
        <end position="25"/>
    </location>
</feature>
<feature type="transmembrane region" description="Helical" evidence="2">
    <location>
        <begin position="62"/>
        <end position="82"/>
    </location>
</feature>
<feature type="transmembrane region" description="Helical" evidence="2">
    <location>
        <begin position="87"/>
        <end position="107"/>
    </location>
</feature>
<accession>Q37382</accession>
<organism>
    <name type="scientific">Acanthamoeba castellanii</name>
    <name type="common">Amoeba</name>
    <dbReference type="NCBI Taxonomy" id="5755"/>
    <lineage>
        <taxon>Eukaryota</taxon>
        <taxon>Amoebozoa</taxon>
        <taxon>Discosea</taxon>
        <taxon>Longamoebia</taxon>
        <taxon>Centramoebida</taxon>
        <taxon>Acanthamoebidae</taxon>
        <taxon>Acanthamoeba</taxon>
    </lineage>
</organism>
<sequence length="118" mass="14228">MTLEYIYIFIFFWGAFFISCLLIFLSYFLVYQESDIEKNSAYECGFQPFEDTRSKFNVRYYLIAILFMIFDLEIMYLFPWSISISTGSFFGVWAIFLFLIILTVGFIYEWQKGALEWD</sequence>
<evidence type="ECO:0000250" key="1"/>
<evidence type="ECO:0000255" key="2"/>
<evidence type="ECO:0000305" key="3"/>
<gene>
    <name type="primary">ND3</name>
    <name type="synonym">NAD3</name>
</gene>
<dbReference type="EC" id="7.1.1.2"/>
<dbReference type="EMBL" id="U12386">
    <property type="protein sequence ID" value="AAD11852.1"/>
    <property type="molecule type" value="Genomic_DNA"/>
</dbReference>
<dbReference type="PIR" id="S53860">
    <property type="entry name" value="S53860"/>
</dbReference>
<dbReference type="RefSeq" id="NP_042559.1">
    <property type="nucleotide sequence ID" value="NC_001637.1"/>
</dbReference>
<dbReference type="SMR" id="Q37382"/>
<dbReference type="GeneID" id="1734054"/>
<dbReference type="GO" id="GO:0031966">
    <property type="term" value="C:mitochondrial membrane"/>
    <property type="evidence" value="ECO:0007669"/>
    <property type="project" value="UniProtKB-SubCell"/>
</dbReference>
<dbReference type="GO" id="GO:0030964">
    <property type="term" value="C:NADH dehydrogenase complex"/>
    <property type="evidence" value="ECO:0007669"/>
    <property type="project" value="TreeGrafter"/>
</dbReference>
<dbReference type="GO" id="GO:0008137">
    <property type="term" value="F:NADH dehydrogenase (ubiquinone) activity"/>
    <property type="evidence" value="ECO:0007669"/>
    <property type="project" value="UniProtKB-EC"/>
</dbReference>
<dbReference type="FunFam" id="1.20.58.1610:FF:000004">
    <property type="entry name" value="NADH-quinone oxidoreductase subunit A"/>
    <property type="match status" value="1"/>
</dbReference>
<dbReference type="Gene3D" id="1.20.58.1610">
    <property type="entry name" value="NADH:ubiquinone/plastoquinone oxidoreductase, chain 3"/>
    <property type="match status" value="1"/>
</dbReference>
<dbReference type="HAMAP" id="MF_01394">
    <property type="entry name" value="NDH1_NuoA"/>
    <property type="match status" value="1"/>
</dbReference>
<dbReference type="InterPro" id="IPR023043">
    <property type="entry name" value="NAD(P)H_OxRDtase_bac/plastid"/>
</dbReference>
<dbReference type="InterPro" id="IPR000440">
    <property type="entry name" value="NADH_UbQ/plastoQ_OxRdtase_su3"/>
</dbReference>
<dbReference type="InterPro" id="IPR038430">
    <property type="entry name" value="NDAH_ubi_oxred_su3_sf"/>
</dbReference>
<dbReference type="PANTHER" id="PTHR11058">
    <property type="entry name" value="NADH-UBIQUINONE OXIDOREDUCTASE CHAIN 3"/>
    <property type="match status" value="1"/>
</dbReference>
<dbReference type="PANTHER" id="PTHR11058:SF9">
    <property type="entry name" value="NADH-UBIQUINONE OXIDOREDUCTASE CHAIN 3"/>
    <property type="match status" value="1"/>
</dbReference>
<dbReference type="Pfam" id="PF00507">
    <property type="entry name" value="Oxidored_q4"/>
    <property type="match status" value="1"/>
</dbReference>
<comment type="function">
    <text evidence="1">Core subunit of the mitochondrial membrane respiratory chain NADH dehydrogenase (Complex I) that is believed to belong to the minimal assembly required for catalysis. Complex I functions in the transfer of electrons from NADH to the respiratory chain. The immediate electron acceptor for the enzyme is believed to be ubiquinone (By similarity).</text>
</comment>
<comment type="catalytic activity">
    <reaction>
        <text>a ubiquinone + NADH + 5 H(+)(in) = a ubiquinol + NAD(+) + 4 H(+)(out)</text>
        <dbReference type="Rhea" id="RHEA:29091"/>
        <dbReference type="Rhea" id="RHEA-COMP:9565"/>
        <dbReference type="Rhea" id="RHEA-COMP:9566"/>
        <dbReference type="ChEBI" id="CHEBI:15378"/>
        <dbReference type="ChEBI" id="CHEBI:16389"/>
        <dbReference type="ChEBI" id="CHEBI:17976"/>
        <dbReference type="ChEBI" id="CHEBI:57540"/>
        <dbReference type="ChEBI" id="CHEBI:57945"/>
        <dbReference type="EC" id="7.1.1.2"/>
    </reaction>
</comment>
<comment type="subcellular location">
    <subcellularLocation>
        <location evidence="1">Mitochondrion membrane</location>
        <topology evidence="1">Multi-pass membrane protein</topology>
    </subcellularLocation>
</comment>
<comment type="similarity">
    <text evidence="3">Belongs to the complex I subunit 3 family.</text>
</comment>
<reference key="1">
    <citation type="journal article" date="1995" name="J. Mol. Biol.">
        <title>The mitochondrial DNA of the amoeboid protozoon, Acanthamoeba castellanii: complete sequence, gene content and genome organization.</title>
        <authorList>
            <person name="Burger G."/>
            <person name="Plante I."/>
            <person name="Lonergan K.M."/>
            <person name="Gray M.W."/>
        </authorList>
    </citation>
    <scope>NUCLEOTIDE SEQUENCE [GENOMIC DNA]</scope>
    <source>
        <strain>ATCC 30010 / Neff</strain>
    </source>
</reference>